<feature type="chain" id="PRO_1000118955" description="Transcription elongation factor GreA">
    <location>
        <begin position="1"/>
        <end position="157"/>
    </location>
</feature>
<feature type="coiled-coil region" evidence="1">
    <location>
        <begin position="47"/>
        <end position="75"/>
    </location>
</feature>
<comment type="function">
    <text evidence="1">Necessary for efficient RNA polymerase transcription elongation past template-encoded arresting sites. The arresting sites in DNA have the property of trapping a certain fraction of elongating RNA polymerases that pass through, resulting in locked ternary complexes. Cleavage of the nascent transcript by cleavage factors such as GreA or GreB allows the resumption of elongation from the new 3'terminus. GreA releases sequences of 2 to 3 nucleotides.</text>
</comment>
<comment type="similarity">
    <text evidence="1">Belongs to the GreA/GreB family.</text>
</comment>
<protein>
    <recommendedName>
        <fullName evidence="1">Transcription elongation factor GreA</fullName>
    </recommendedName>
    <alternativeName>
        <fullName evidence="1">Transcript cleavage factor GreA</fullName>
    </alternativeName>
</protein>
<proteinExistence type="inferred from homology"/>
<gene>
    <name evidence="1" type="primary">greA</name>
    <name type="ordered locus">Chy400_1344</name>
</gene>
<dbReference type="EMBL" id="CP001364">
    <property type="protein sequence ID" value="ACM52765.1"/>
    <property type="molecule type" value="Genomic_DNA"/>
</dbReference>
<dbReference type="SMR" id="B9LBX1"/>
<dbReference type="KEGG" id="chl:Chy400_1344"/>
<dbReference type="HOGENOM" id="CLU_101379_2_1_0"/>
<dbReference type="OrthoDB" id="9808774at2"/>
<dbReference type="GO" id="GO:0003677">
    <property type="term" value="F:DNA binding"/>
    <property type="evidence" value="ECO:0007669"/>
    <property type="project" value="UniProtKB-UniRule"/>
</dbReference>
<dbReference type="GO" id="GO:0070063">
    <property type="term" value="F:RNA polymerase binding"/>
    <property type="evidence" value="ECO:0007669"/>
    <property type="project" value="InterPro"/>
</dbReference>
<dbReference type="GO" id="GO:0006354">
    <property type="term" value="P:DNA-templated transcription elongation"/>
    <property type="evidence" value="ECO:0007669"/>
    <property type="project" value="TreeGrafter"/>
</dbReference>
<dbReference type="GO" id="GO:0032784">
    <property type="term" value="P:regulation of DNA-templated transcription elongation"/>
    <property type="evidence" value="ECO:0007669"/>
    <property type="project" value="UniProtKB-UniRule"/>
</dbReference>
<dbReference type="FunFam" id="1.10.287.180:FF:000001">
    <property type="entry name" value="Transcription elongation factor GreA"/>
    <property type="match status" value="1"/>
</dbReference>
<dbReference type="FunFam" id="3.10.50.30:FF:000001">
    <property type="entry name" value="Transcription elongation factor GreA"/>
    <property type="match status" value="1"/>
</dbReference>
<dbReference type="Gene3D" id="3.10.50.30">
    <property type="entry name" value="Transcription elongation factor, GreA/GreB, C-terminal domain"/>
    <property type="match status" value="1"/>
</dbReference>
<dbReference type="Gene3D" id="1.10.287.180">
    <property type="entry name" value="Transcription elongation factor, GreA/GreB, N-terminal domain"/>
    <property type="match status" value="1"/>
</dbReference>
<dbReference type="HAMAP" id="MF_00105">
    <property type="entry name" value="GreA_GreB"/>
    <property type="match status" value="1"/>
</dbReference>
<dbReference type="InterPro" id="IPR036953">
    <property type="entry name" value="GreA/GreB_C_sf"/>
</dbReference>
<dbReference type="InterPro" id="IPR006359">
    <property type="entry name" value="Tscrpt_elong_fac_GreA"/>
</dbReference>
<dbReference type="InterPro" id="IPR028624">
    <property type="entry name" value="Tscrpt_elong_fac_GreA/B"/>
</dbReference>
<dbReference type="InterPro" id="IPR001437">
    <property type="entry name" value="Tscrpt_elong_fac_GreA/B_C"/>
</dbReference>
<dbReference type="InterPro" id="IPR023459">
    <property type="entry name" value="Tscrpt_elong_fac_GreA/B_fam"/>
</dbReference>
<dbReference type="InterPro" id="IPR022691">
    <property type="entry name" value="Tscrpt_elong_fac_GreA/B_N"/>
</dbReference>
<dbReference type="InterPro" id="IPR036805">
    <property type="entry name" value="Tscrpt_elong_fac_GreA/B_N_sf"/>
</dbReference>
<dbReference type="NCBIfam" id="TIGR01462">
    <property type="entry name" value="greA"/>
    <property type="match status" value="1"/>
</dbReference>
<dbReference type="NCBIfam" id="NF001263">
    <property type="entry name" value="PRK00226.1-4"/>
    <property type="match status" value="1"/>
</dbReference>
<dbReference type="PANTHER" id="PTHR30437">
    <property type="entry name" value="TRANSCRIPTION ELONGATION FACTOR GREA"/>
    <property type="match status" value="1"/>
</dbReference>
<dbReference type="PANTHER" id="PTHR30437:SF4">
    <property type="entry name" value="TRANSCRIPTION ELONGATION FACTOR GREA"/>
    <property type="match status" value="1"/>
</dbReference>
<dbReference type="Pfam" id="PF01272">
    <property type="entry name" value="GreA_GreB"/>
    <property type="match status" value="1"/>
</dbReference>
<dbReference type="Pfam" id="PF03449">
    <property type="entry name" value="GreA_GreB_N"/>
    <property type="match status" value="1"/>
</dbReference>
<dbReference type="PIRSF" id="PIRSF006092">
    <property type="entry name" value="GreA_GreB"/>
    <property type="match status" value="1"/>
</dbReference>
<dbReference type="SUPFAM" id="SSF54534">
    <property type="entry name" value="FKBP-like"/>
    <property type="match status" value="1"/>
</dbReference>
<dbReference type="SUPFAM" id="SSF46557">
    <property type="entry name" value="GreA transcript cleavage protein, N-terminal domain"/>
    <property type="match status" value="1"/>
</dbReference>
<name>GREA_CHLSY</name>
<organism>
    <name type="scientific">Chloroflexus aurantiacus (strain ATCC 29364 / DSM 637 / Y-400-fl)</name>
    <dbReference type="NCBI Taxonomy" id="480224"/>
    <lineage>
        <taxon>Bacteria</taxon>
        <taxon>Bacillati</taxon>
        <taxon>Chloroflexota</taxon>
        <taxon>Chloroflexia</taxon>
        <taxon>Chloroflexales</taxon>
        <taxon>Chloroflexineae</taxon>
        <taxon>Chloroflexaceae</taxon>
        <taxon>Chloroflexus</taxon>
    </lineage>
</organism>
<sequence>MTEKPTYLTREGRARLEAELEYLTTVERKQIAERIAAAKELGDISESGEYEDAKKAQALLEGRIRELKHLLSRAEVIDEDQASNGEVRVGSSVTVRFEDDGTEETWTIVGSAEANPRQGRISNESPLGAALLGKRARNKVTVHTPSGVMKLTILKVR</sequence>
<evidence type="ECO:0000255" key="1">
    <source>
        <dbReference type="HAMAP-Rule" id="MF_00105"/>
    </source>
</evidence>
<accession>B9LBX1</accession>
<reference key="1">
    <citation type="submission" date="2009-01" db="EMBL/GenBank/DDBJ databases">
        <title>Complete sequence of Chloroflexus sp. Y-400-fl.</title>
        <authorList>
            <consortium name="US DOE Joint Genome Institute"/>
            <person name="Lucas S."/>
            <person name="Copeland A."/>
            <person name="Lapidus A."/>
            <person name="Glavina del Rio T."/>
            <person name="Dalin E."/>
            <person name="Tice H."/>
            <person name="Bruce D."/>
            <person name="Goodwin L."/>
            <person name="Pitluck S."/>
            <person name="Sims D."/>
            <person name="Kiss H."/>
            <person name="Brettin T."/>
            <person name="Detter J.C."/>
            <person name="Han C."/>
            <person name="Larimer F."/>
            <person name="Land M."/>
            <person name="Hauser L."/>
            <person name="Kyrpides N."/>
            <person name="Ovchinnikova G."/>
            <person name="Bryant D.A."/>
            <person name="Richardson P."/>
        </authorList>
    </citation>
    <scope>NUCLEOTIDE SEQUENCE [LARGE SCALE GENOMIC DNA]</scope>
    <source>
        <strain>ATCC 29364 / DSM 637 / Y-400-fl</strain>
    </source>
</reference>
<keyword id="KW-0175">Coiled coil</keyword>
<keyword id="KW-0238">DNA-binding</keyword>
<keyword id="KW-0804">Transcription</keyword>
<keyword id="KW-0805">Transcription regulation</keyword>